<protein>
    <recommendedName>
        <fullName evidence="1">Large ribosomal subunit protein uL5</fullName>
    </recommendedName>
    <alternativeName>
        <fullName evidence="2">50S ribosomal protein L5</fullName>
    </alternativeName>
</protein>
<organism>
    <name type="scientific">Aeromonas salmonicida (strain A449)</name>
    <dbReference type="NCBI Taxonomy" id="382245"/>
    <lineage>
        <taxon>Bacteria</taxon>
        <taxon>Pseudomonadati</taxon>
        <taxon>Pseudomonadota</taxon>
        <taxon>Gammaproteobacteria</taxon>
        <taxon>Aeromonadales</taxon>
        <taxon>Aeromonadaceae</taxon>
        <taxon>Aeromonas</taxon>
    </lineage>
</organism>
<name>RL5_AERS4</name>
<feature type="chain" id="PRO_1000052685" description="Large ribosomal subunit protein uL5">
    <location>
        <begin position="1"/>
        <end position="179"/>
    </location>
</feature>
<reference key="1">
    <citation type="journal article" date="2008" name="BMC Genomics">
        <title>The genome of Aeromonas salmonicida subsp. salmonicida A449: insights into the evolution of a fish pathogen.</title>
        <authorList>
            <person name="Reith M.E."/>
            <person name="Singh R.K."/>
            <person name="Curtis B."/>
            <person name="Boyd J.M."/>
            <person name="Bouevitch A."/>
            <person name="Kimball J."/>
            <person name="Munholland J."/>
            <person name="Murphy C."/>
            <person name="Sarty D."/>
            <person name="Williams J."/>
            <person name="Nash J.H."/>
            <person name="Johnson S.C."/>
            <person name="Brown L.L."/>
        </authorList>
    </citation>
    <scope>NUCLEOTIDE SEQUENCE [LARGE SCALE GENOMIC DNA]</scope>
    <source>
        <strain>A449</strain>
    </source>
</reference>
<accession>A4SSZ4</accession>
<sequence>MAKLHDYYKSDVVNELAKQFGYKTIMQVPRIEKITLNMGVGEAISDKKLLENAAADMAAISGQKPLITKARKSVAGFKIREGYPIGCKVTLRGERMWEFLERLICISVPRIRDFRGLNAKAFDGRGNYSMGVREQIIFPEIDYDKVDRVRGLDITITTSANTDEEGRALLAAFNFPFRK</sequence>
<gene>
    <name evidence="1" type="primary">rplE</name>
    <name type="ordered locus">ASA_4075</name>
</gene>
<evidence type="ECO:0000255" key="1">
    <source>
        <dbReference type="HAMAP-Rule" id="MF_01333"/>
    </source>
</evidence>
<evidence type="ECO:0000305" key="2"/>
<dbReference type="EMBL" id="CP000644">
    <property type="protein sequence ID" value="ABO92016.1"/>
    <property type="molecule type" value="Genomic_DNA"/>
</dbReference>
<dbReference type="RefSeq" id="WP_005319725.1">
    <property type="nucleotide sequence ID" value="NC_009348.1"/>
</dbReference>
<dbReference type="SMR" id="A4SSZ4"/>
<dbReference type="STRING" id="29491.GCA_000820065_03477"/>
<dbReference type="GeneID" id="92721510"/>
<dbReference type="KEGG" id="asa:ASA_4075"/>
<dbReference type="eggNOG" id="COG0094">
    <property type="taxonomic scope" value="Bacteria"/>
</dbReference>
<dbReference type="HOGENOM" id="CLU_061015_2_1_6"/>
<dbReference type="Proteomes" id="UP000000225">
    <property type="component" value="Chromosome"/>
</dbReference>
<dbReference type="GO" id="GO:1990904">
    <property type="term" value="C:ribonucleoprotein complex"/>
    <property type="evidence" value="ECO:0007669"/>
    <property type="project" value="UniProtKB-KW"/>
</dbReference>
<dbReference type="GO" id="GO:0005840">
    <property type="term" value="C:ribosome"/>
    <property type="evidence" value="ECO:0007669"/>
    <property type="project" value="UniProtKB-KW"/>
</dbReference>
<dbReference type="GO" id="GO:0019843">
    <property type="term" value="F:rRNA binding"/>
    <property type="evidence" value="ECO:0007669"/>
    <property type="project" value="UniProtKB-UniRule"/>
</dbReference>
<dbReference type="GO" id="GO:0003735">
    <property type="term" value="F:structural constituent of ribosome"/>
    <property type="evidence" value="ECO:0007669"/>
    <property type="project" value="InterPro"/>
</dbReference>
<dbReference type="GO" id="GO:0000049">
    <property type="term" value="F:tRNA binding"/>
    <property type="evidence" value="ECO:0007669"/>
    <property type="project" value="UniProtKB-UniRule"/>
</dbReference>
<dbReference type="GO" id="GO:0006412">
    <property type="term" value="P:translation"/>
    <property type="evidence" value="ECO:0007669"/>
    <property type="project" value="UniProtKB-UniRule"/>
</dbReference>
<dbReference type="FunFam" id="3.30.1440.10:FF:000001">
    <property type="entry name" value="50S ribosomal protein L5"/>
    <property type="match status" value="1"/>
</dbReference>
<dbReference type="Gene3D" id="3.30.1440.10">
    <property type="match status" value="1"/>
</dbReference>
<dbReference type="HAMAP" id="MF_01333_B">
    <property type="entry name" value="Ribosomal_uL5_B"/>
    <property type="match status" value="1"/>
</dbReference>
<dbReference type="InterPro" id="IPR002132">
    <property type="entry name" value="Ribosomal_uL5"/>
</dbReference>
<dbReference type="InterPro" id="IPR020930">
    <property type="entry name" value="Ribosomal_uL5_bac-type"/>
</dbReference>
<dbReference type="InterPro" id="IPR031309">
    <property type="entry name" value="Ribosomal_uL5_C"/>
</dbReference>
<dbReference type="InterPro" id="IPR020929">
    <property type="entry name" value="Ribosomal_uL5_CS"/>
</dbReference>
<dbReference type="InterPro" id="IPR022803">
    <property type="entry name" value="Ribosomal_uL5_dom_sf"/>
</dbReference>
<dbReference type="InterPro" id="IPR031310">
    <property type="entry name" value="Ribosomal_uL5_N"/>
</dbReference>
<dbReference type="NCBIfam" id="NF000585">
    <property type="entry name" value="PRK00010.1"/>
    <property type="match status" value="1"/>
</dbReference>
<dbReference type="PANTHER" id="PTHR11994">
    <property type="entry name" value="60S RIBOSOMAL PROTEIN L11-RELATED"/>
    <property type="match status" value="1"/>
</dbReference>
<dbReference type="Pfam" id="PF00281">
    <property type="entry name" value="Ribosomal_L5"/>
    <property type="match status" value="1"/>
</dbReference>
<dbReference type="Pfam" id="PF00673">
    <property type="entry name" value="Ribosomal_L5_C"/>
    <property type="match status" value="1"/>
</dbReference>
<dbReference type="PIRSF" id="PIRSF002161">
    <property type="entry name" value="Ribosomal_L5"/>
    <property type="match status" value="1"/>
</dbReference>
<dbReference type="SUPFAM" id="SSF55282">
    <property type="entry name" value="RL5-like"/>
    <property type="match status" value="1"/>
</dbReference>
<dbReference type="PROSITE" id="PS00358">
    <property type="entry name" value="RIBOSOMAL_L5"/>
    <property type="match status" value="1"/>
</dbReference>
<proteinExistence type="inferred from homology"/>
<keyword id="KW-0687">Ribonucleoprotein</keyword>
<keyword id="KW-0689">Ribosomal protein</keyword>
<keyword id="KW-0694">RNA-binding</keyword>
<keyword id="KW-0699">rRNA-binding</keyword>
<keyword id="KW-0820">tRNA-binding</keyword>
<comment type="function">
    <text evidence="1">This is one of the proteins that bind and probably mediate the attachment of the 5S RNA into the large ribosomal subunit, where it forms part of the central protuberance. In the 70S ribosome it contacts protein S13 of the 30S subunit (bridge B1b), connecting the 2 subunits; this bridge is implicated in subunit movement. Contacts the P site tRNA; the 5S rRNA and some of its associated proteins might help stabilize positioning of ribosome-bound tRNAs.</text>
</comment>
<comment type="subunit">
    <text evidence="1">Part of the 50S ribosomal subunit; part of the 5S rRNA/L5/L18/L25 subcomplex. Contacts the 5S rRNA and the P site tRNA. Forms a bridge to the 30S subunit in the 70S ribosome.</text>
</comment>
<comment type="similarity">
    <text evidence="1">Belongs to the universal ribosomal protein uL5 family.</text>
</comment>